<organism>
    <name type="scientific">Mycobacterium bovis (strain BCG / Pasteur 1173P2)</name>
    <dbReference type="NCBI Taxonomy" id="410289"/>
    <lineage>
        <taxon>Bacteria</taxon>
        <taxon>Bacillati</taxon>
        <taxon>Actinomycetota</taxon>
        <taxon>Actinomycetes</taxon>
        <taxon>Mycobacteriales</taxon>
        <taxon>Mycobacteriaceae</taxon>
        <taxon>Mycobacterium</taxon>
        <taxon>Mycobacterium tuberculosis complex</taxon>
    </lineage>
</organism>
<gene>
    <name type="ordered locus">BCG_1935c</name>
</gene>
<accession>A1KJW1</accession>
<evidence type="ECO:0000250" key="1"/>
<evidence type="ECO:0000305" key="2"/>
<keyword id="KW-0489">Methyltransferase</keyword>
<keyword id="KW-0949">S-adenosyl-L-methionine</keyword>
<keyword id="KW-0808">Transferase</keyword>
<sequence length="303" mass="33267">MTTPEYGSLRSDDDHWDIVSNVGYTALLVAGWRALHTTGPKPLVQDEYAKHFITASADPYLEGLLANPRTSEDGTAFPRLYGVQTRFFDDFFNCADEAGIRQAVIVAAGLDCRAYRLDWQPGTTVFEIDVPKVLEFKARVLSERGAVPKAHRVAVPADLRTDWPTPLTAAGFDPQRPSAWSVEGLLPYLTGDAQYALFARIDELCAPGSRVALGALGSRLDHEQLAALETAHPGVNMSGDVNFSALTYDDKTDPVEWLVEHGWAVDPVRSTLELQVGYGLTPPDVDVKIDSFMRSQYITAVRA</sequence>
<feature type="chain" id="PRO_0000361144" description="Putative S-adenosyl-L-methionine-dependent methyltransferase BCG_1935c">
    <location>
        <begin position="1"/>
        <end position="303"/>
    </location>
</feature>
<feature type="binding site" evidence="1">
    <location>
        <position position="129"/>
    </location>
    <ligand>
        <name>S-adenosyl-L-methionine</name>
        <dbReference type="ChEBI" id="CHEBI:59789"/>
    </ligand>
</feature>
<feature type="binding site" evidence="1">
    <location>
        <begin position="158"/>
        <end position="159"/>
    </location>
    <ligand>
        <name>S-adenosyl-L-methionine</name>
        <dbReference type="ChEBI" id="CHEBI:59789"/>
    </ligand>
</feature>
<reference key="1">
    <citation type="journal article" date="2007" name="Proc. Natl. Acad. Sci. U.S.A.">
        <title>Genome plasticity of BCG and impact on vaccine efficacy.</title>
        <authorList>
            <person name="Brosch R."/>
            <person name="Gordon S.V."/>
            <person name="Garnier T."/>
            <person name="Eiglmeier K."/>
            <person name="Frigui W."/>
            <person name="Valenti P."/>
            <person name="Dos Santos S."/>
            <person name="Duthoy S."/>
            <person name="Lacroix C."/>
            <person name="Garcia-Pelayo C."/>
            <person name="Inwald J.K."/>
            <person name="Golby P."/>
            <person name="Garcia J.N."/>
            <person name="Hewinson R.G."/>
            <person name="Behr M.A."/>
            <person name="Quail M.A."/>
            <person name="Churcher C."/>
            <person name="Barrell B.G."/>
            <person name="Parkhill J."/>
            <person name="Cole S.T."/>
        </authorList>
    </citation>
    <scope>NUCLEOTIDE SEQUENCE [LARGE SCALE GENOMIC DNA]</scope>
    <source>
        <strain>BCG / Pasteur 1173P2</strain>
    </source>
</reference>
<dbReference type="EC" id="2.1.1.-"/>
<dbReference type="EMBL" id="AM408590">
    <property type="protein sequence ID" value="CAL71922.1"/>
    <property type="molecule type" value="Genomic_DNA"/>
</dbReference>
<dbReference type="RefSeq" id="WP_003409526.1">
    <property type="nucleotide sequence ID" value="NC_008769.1"/>
</dbReference>
<dbReference type="SMR" id="A1KJW1"/>
<dbReference type="KEGG" id="mbb:BCG_1935c"/>
<dbReference type="HOGENOM" id="CLU_056160_2_1_11"/>
<dbReference type="Proteomes" id="UP000001472">
    <property type="component" value="Chromosome"/>
</dbReference>
<dbReference type="GO" id="GO:0008168">
    <property type="term" value="F:methyltransferase activity"/>
    <property type="evidence" value="ECO:0007669"/>
    <property type="project" value="UniProtKB-KW"/>
</dbReference>
<dbReference type="GO" id="GO:0032259">
    <property type="term" value="P:methylation"/>
    <property type="evidence" value="ECO:0007669"/>
    <property type="project" value="UniProtKB-KW"/>
</dbReference>
<dbReference type="Gene3D" id="3.40.50.150">
    <property type="entry name" value="Vaccinia Virus protein VP39"/>
    <property type="match status" value="1"/>
</dbReference>
<dbReference type="InterPro" id="IPR007213">
    <property type="entry name" value="Ppm1/Ppm2/Tcmp"/>
</dbReference>
<dbReference type="InterPro" id="IPR029063">
    <property type="entry name" value="SAM-dependent_MTases_sf"/>
</dbReference>
<dbReference type="InterPro" id="IPR011610">
    <property type="entry name" value="SAM_mthyl_Trfase_ML2640-like"/>
</dbReference>
<dbReference type="NCBIfam" id="TIGR00027">
    <property type="entry name" value="mthyl_TIGR00027"/>
    <property type="match status" value="1"/>
</dbReference>
<dbReference type="PANTHER" id="PTHR43619">
    <property type="entry name" value="S-ADENOSYL-L-METHIONINE-DEPENDENT METHYLTRANSFERASE YKTD-RELATED"/>
    <property type="match status" value="1"/>
</dbReference>
<dbReference type="PANTHER" id="PTHR43619:SF2">
    <property type="entry name" value="S-ADENOSYL-L-METHIONINE-DEPENDENT METHYLTRANSFERASES SUPERFAMILY PROTEIN"/>
    <property type="match status" value="1"/>
</dbReference>
<dbReference type="Pfam" id="PF04072">
    <property type="entry name" value="LCM"/>
    <property type="match status" value="1"/>
</dbReference>
<dbReference type="SUPFAM" id="SSF53335">
    <property type="entry name" value="S-adenosyl-L-methionine-dependent methyltransferases"/>
    <property type="match status" value="1"/>
</dbReference>
<name>Y1935_MYCBP</name>
<protein>
    <recommendedName>
        <fullName>Putative S-adenosyl-L-methionine-dependent methyltransferase BCG_1935c</fullName>
        <ecNumber>2.1.1.-</ecNumber>
    </recommendedName>
</protein>
<comment type="function">
    <text evidence="1">Exhibits S-adenosyl-L-methionine-dependent methyltransferase activity.</text>
</comment>
<comment type="similarity">
    <text evidence="2">Belongs to the UPF0677 family.</text>
</comment>
<proteinExistence type="inferred from homology"/>